<evidence type="ECO:0000250" key="1"/>
<evidence type="ECO:0000305" key="2"/>
<sequence>MTDIAQLLGKDADNLLQHRCMTIPSDQLYLPGHDYVDRVMIDNNRPPAVLRNMQTLYNTGRLAGTGYLSILPVDQGVEHSAGASFAANPLYFDPKNIVELAIEAGCNCVASTYGVLASVSRRYAHRIPFLVKLNHNETLSYPNTYDQTLYASVEQAFNMGAVAVGATIYFGSEESRRQIEEISAAFERAHELGMVTVLWAYLRNSAFKKDGVDYHVSADLTGQANHLAATIGADIVKQKMAENNGGYKAINYGYTDDRVYSKLTSENPIDLVRYQLANCYMGRAGLINSGGAAGGETDLSDAVRTAVINKRAGGMGLILGRKAFKKSMADGVKLINAVQDVYLDSKITIA</sequence>
<feature type="initiator methionine" description="Removed" evidence="1">
    <location>
        <position position="1"/>
    </location>
</feature>
<feature type="chain" id="PRO_0000138940" description="Fructose-bisphosphate aldolase class 1">
    <location>
        <begin position="2"/>
        <end position="350"/>
    </location>
</feature>
<feature type="active site" description="Schiff-base intermediate with dihydroxyacetone-P">
    <location>
        <position position="237"/>
    </location>
</feature>
<feature type="modified residue" description="N6-acetyllysine" evidence="1">
    <location>
        <position position="208"/>
    </location>
</feature>
<feature type="modified residue" description="N6-acetyllysine" evidence="1">
    <location>
        <position position="262"/>
    </location>
</feature>
<name>ALF1_ECOL6</name>
<reference key="1">
    <citation type="journal article" date="2002" name="Proc. Natl. Acad. Sci. U.S.A.">
        <title>Extensive mosaic structure revealed by the complete genome sequence of uropathogenic Escherichia coli.</title>
        <authorList>
            <person name="Welch R.A."/>
            <person name="Burland V."/>
            <person name="Plunkett G. III"/>
            <person name="Redford P."/>
            <person name="Roesch P."/>
            <person name="Rasko D."/>
            <person name="Buckles E.L."/>
            <person name="Liou S.-R."/>
            <person name="Boutin A."/>
            <person name="Hackett J."/>
            <person name="Stroud D."/>
            <person name="Mayhew G.F."/>
            <person name="Rose D.J."/>
            <person name="Zhou S."/>
            <person name="Schwartz D.C."/>
            <person name="Perna N.T."/>
            <person name="Mobley H.L.T."/>
            <person name="Donnenberg M.S."/>
            <person name="Blattner F.R."/>
        </authorList>
    </citation>
    <scope>NUCLEOTIDE SEQUENCE [LARGE SCALE GENOMIC DNA]</scope>
    <source>
        <strain>CFT073 / ATCC 700928 / UPEC</strain>
    </source>
</reference>
<dbReference type="EC" id="4.1.2.13"/>
<dbReference type="EMBL" id="AE014075">
    <property type="protein sequence ID" value="AAN81079.1"/>
    <property type="status" value="ALT_INIT"/>
    <property type="molecule type" value="Genomic_DNA"/>
</dbReference>
<dbReference type="RefSeq" id="WP_000129551.1">
    <property type="nucleotide sequence ID" value="NZ_CP051263.1"/>
</dbReference>
<dbReference type="SMR" id="P0A992"/>
<dbReference type="STRING" id="199310.c2623"/>
<dbReference type="GeneID" id="75205967"/>
<dbReference type="KEGG" id="ecc:c2623"/>
<dbReference type="eggNOG" id="COG1830">
    <property type="taxonomic scope" value="Bacteria"/>
</dbReference>
<dbReference type="HOGENOM" id="CLU_057069_0_0_6"/>
<dbReference type="Proteomes" id="UP000001410">
    <property type="component" value="Chromosome"/>
</dbReference>
<dbReference type="GO" id="GO:0005737">
    <property type="term" value="C:cytoplasm"/>
    <property type="evidence" value="ECO:0007669"/>
    <property type="project" value="UniProtKB-SubCell"/>
</dbReference>
<dbReference type="GO" id="GO:0004332">
    <property type="term" value="F:fructose-bisphosphate aldolase activity"/>
    <property type="evidence" value="ECO:0007669"/>
    <property type="project" value="UniProtKB-EC"/>
</dbReference>
<dbReference type="GO" id="GO:0006096">
    <property type="term" value="P:glycolytic process"/>
    <property type="evidence" value="ECO:0007669"/>
    <property type="project" value="UniProtKB-KW"/>
</dbReference>
<dbReference type="CDD" id="cd00958">
    <property type="entry name" value="DhnA"/>
    <property type="match status" value="1"/>
</dbReference>
<dbReference type="FunFam" id="3.20.20.70:FF:000041">
    <property type="entry name" value="Fructose-bisphosphate aldolase class I"/>
    <property type="match status" value="1"/>
</dbReference>
<dbReference type="Gene3D" id="3.20.20.70">
    <property type="entry name" value="Aldolase class I"/>
    <property type="match status" value="1"/>
</dbReference>
<dbReference type="InterPro" id="IPR013785">
    <property type="entry name" value="Aldolase_TIM"/>
</dbReference>
<dbReference type="InterPro" id="IPR002915">
    <property type="entry name" value="DeoC/FbaB/LacD_aldolase"/>
</dbReference>
<dbReference type="InterPro" id="IPR050456">
    <property type="entry name" value="DeoC/FbaB_aldolase"/>
</dbReference>
<dbReference type="InterPro" id="IPR041720">
    <property type="entry name" value="FbaB-like"/>
</dbReference>
<dbReference type="NCBIfam" id="NF006706">
    <property type="entry name" value="PRK09250.1-3"/>
    <property type="match status" value="1"/>
</dbReference>
<dbReference type="NCBIfam" id="NF006707">
    <property type="entry name" value="PRK09250.1-4"/>
    <property type="match status" value="1"/>
</dbReference>
<dbReference type="PANTHER" id="PTHR47916">
    <property type="entry name" value="FRUCTOSE-BISPHOSPHATE ALDOLASE CLASS 1"/>
    <property type="match status" value="1"/>
</dbReference>
<dbReference type="PANTHER" id="PTHR47916:SF4">
    <property type="entry name" value="FRUCTOSE-BISPHOSPHATE ALDOLASE CLASS 1"/>
    <property type="match status" value="1"/>
</dbReference>
<dbReference type="Pfam" id="PF01791">
    <property type="entry name" value="DeoC"/>
    <property type="match status" value="1"/>
</dbReference>
<dbReference type="SMART" id="SM01133">
    <property type="entry name" value="DeoC"/>
    <property type="match status" value="1"/>
</dbReference>
<dbReference type="SUPFAM" id="SSF51569">
    <property type="entry name" value="Aldolase"/>
    <property type="match status" value="1"/>
</dbReference>
<comment type="catalytic activity">
    <reaction>
        <text>beta-D-fructose 1,6-bisphosphate = D-glyceraldehyde 3-phosphate + dihydroxyacetone phosphate</text>
        <dbReference type="Rhea" id="RHEA:14729"/>
        <dbReference type="ChEBI" id="CHEBI:32966"/>
        <dbReference type="ChEBI" id="CHEBI:57642"/>
        <dbReference type="ChEBI" id="CHEBI:59776"/>
        <dbReference type="EC" id="4.1.2.13"/>
    </reaction>
</comment>
<comment type="subunit">
    <text evidence="1">Homooctamer or homodecamer.</text>
</comment>
<comment type="subcellular location">
    <subcellularLocation>
        <location evidence="2">Cytoplasm</location>
    </subcellularLocation>
</comment>
<comment type="similarity">
    <text evidence="2">Belongs to the DeoC/FbaB aldolase family. FbaB subfamily.</text>
</comment>
<comment type="sequence caution" evidence="2">
    <conflict type="erroneous initiation">
        <sequence resource="EMBL-CDS" id="AAN81079"/>
    </conflict>
</comment>
<proteinExistence type="inferred from homology"/>
<organism>
    <name type="scientific">Escherichia coli O6:H1 (strain CFT073 / ATCC 700928 / UPEC)</name>
    <dbReference type="NCBI Taxonomy" id="199310"/>
    <lineage>
        <taxon>Bacteria</taxon>
        <taxon>Pseudomonadati</taxon>
        <taxon>Pseudomonadota</taxon>
        <taxon>Gammaproteobacteria</taxon>
        <taxon>Enterobacterales</taxon>
        <taxon>Enterobacteriaceae</taxon>
        <taxon>Escherichia</taxon>
    </lineage>
</organism>
<protein>
    <recommendedName>
        <fullName>Fructose-bisphosphate aldolase class 1</fullName>
        <ecNumber>4.1.2.13</ecNumber>
    </recommendedName>
    <alternativeName>
        <fullName>Fructose-bisphosphate aldolase class I</fullName>
        <shortName>FBP aldolase</shortName>
    </alternativeName>
</protein>
<gene>
    <name type="primary">fbaB</name>
    <name type="ordered locus">c2623</name>
</gene>
<accession>P0A992</accession>
<accession>P71295</accession>
<accession>P76416</accession>
<keyword id="KW-0007">Acetylation</keyword>
<keyword id="KW-0963">Cytoplasm</keyword>
<keyword id="KW-0324">Glycolysis</keyword>
<keyword id="KW-0456">Lyase</keyword>
<keyword id="KW-1185">Reference proteome</keyword>
<keyword id="KW-0704">Schiff base</keyword>